<protein>
    <recommendedName>
        <fullName evidence="1">Glycine--tRNA ligase beta subunit</fullName>
        <ecNumber evidence="1">6.1.1.14</ecNumber>
    </recommendedName>
    <alternativeName>
        <fullName evidence="1">Glycyl-tRNA synthetase beta subunit</fullName>
        <shortName evidence="1">GlyRS</shortName>
    </alternativeName>
</protein>
<proteinExistence type="inferred from homology"/>
<feature type="chain" id="PRO_1000101329" description="Glycine--tRNA ligase beta subunit">
    <location>
        <begin position="1"/>
        <end position="667"/>
    </location>
</feature>
<name>SYGB_RICCK</name>
<comment type="catalytic activity">
    <reaction evidence="1">
        <text>tRNA(Gly) + glycine + ATP = glycyl-tRNA(Gly) + AMP + diphosphate</text>
        <dbReference type="Rhea" id="RHEA:16013"/>
        <dbReference type="Rhea" id="RHEA-COMP:9664"/>
        <dbReference type="Rhea" id="RHEA-COMP:9683"/>
        <dbReference type="ChEBI" id="CHEBI:30616"/>
        <dbReference type="ChEBI" id="CHEBI:33019"/>
        <dbReference type="ChEBI" id="CHEBI:57305"/>
        <dbReference type="ChEBI" id="CHEBI:78442"/>
        <dbReference type="ChEBI" id="CHEBI:78522"/>
        <dbReference type="ChEBI" id="CHEBI:456215"/>
        <dbReference type="EC" id="6.1.1.14"/>
    </reaction>
</comment>
<comment type="subunit">
    <text evidence="1">Tetramer of two alpha and two beta subunits.</text>
</comment>
<comment type="subcellular location">
    <subcellularLocation>
        <location evidence="1">Cytoplasm</location>
    </subcellularLocation>
</comment>
<comment type="similarity">
    <text evidence="1">Belongs to the class-II aminoacyl-tRNA synthetase family.</text>
</comment>
<organism>
    <name type="scientific">Rickettsia canadensis (strain McKiel)</name>
    <dbReference type="NCBI Taxonomy" id="293613"/>
    <lineage>
        <taxon>Bacteria</taxon>
        <taxon>Pseudomonadati</taxon>
        <taxon>Pseudomonadota</taxon>
        <taxon>Alphaproteobacteria</taxon>
        <taxon>Rickettsiales</taxon>
        <taxon>Rickettsiaceae</taxon>
        <taxon>Rickettsieae</taxon>
        <taxon>Rickettsia</taxon>
        <taxon>belli group</taxon>
    </lineage>
</organism>
<gene>
    <name evidence="1" type="primary">glyS</name>
    <name type="ordered locus">A1E_05440</name>
</gene>
<accession>A8F071</accession>
<dbReference type="EC" id="6.1.1.14" evidence="1"/>
<dbReference type="EMBL" id="CP000409">
    <property type="protein sequence ID" value="ABV74004.1"/>
    <property type="molecule type" value="Genomic_DNA"/>
</dbReference>
<dbReference type="RefSeq" id="WP_012149199.1">
    <property type="nucleotide sequence ID" value="NC_009879.1"/>
</dbReference>
<dbReference type="SMR" id="A8F071"/>
<dbReference type="STRING" id="293613.A1E_05440"/>
<dbReference type="KEGG" id="rcm:A1E_05440"/>
<dbReference type="eggNOG" id="COG0751">
    <property type="taxonomic scope" value="Bacteria"/>
</dbReference>
<dbReference type="HOGENOM" id="CLU_007220_2_1_5"/>
<dbReference type="Proteomes" id="UP000007056">
    <property type="component" value="Chromosome"/>
</dbReference>
<dbReference type="GO" id="GO:0005829">
    <property type="term" value="C:cytosol"/>
    <property type="evidence" value="ECO:0007669"/>
    <property type="project" value="TreeGrafter"/>
</dbReference>
<dbReference type="GO" id="GO:0004814">
    <property type="term" value="F:arginine-tRNA ligase activity"/>
    <property type="evidence" value="ECO:0007669"/>
    <property type="project" value="InterPro"/>
</dbReference>
<dbReference type="GO" id="GO:0005524">
    <property type="term" value="F:ATP binding"/>
    <property type="evidence" value="ECO:0007669"/>
    <property type="project" value="UniProtKB-UniRule"/>
</dbReference>
<dbReference type="GO" id="GO:0004820">
    <property type="term" value="F:glycine-tRNA ligase activity"/>
    <property type="evidence" value="ECO:0007669"/>
    <property type="project" value="UniProtKB-UniRule"/>
</dbReference>
<dbReference type="GO" id="GO:0006420">
    <property type="term" value="P:arginyl-tRNA aminoacylation"/>
    <property type="evidence" value="ECO:0007669"/>
    <property type="project" value="InterPro"/>
</dbReference>
<dbReference type="GO" id="GO:0006426">
    <property type="term" value="P:glycyl-tRNA aminoacylation"/>
    <property type="evidence" value="ECO:0007669"/>
    <property type="project" value="UniProtKB-UniRule"/>
</dbReference>
<dbReference type="HAMAP" id="MF_00255">
    <property type="entry name" value="Gly_tRNA_synth_beta"/>
    <property type="match status" value="1"/>
</dbReference>
<dbReference type="InterPro" id="IPR008909">
    <property type="entry name" value="DALR_anticod-bd"/>
</dbReference>
<dbReference type="InterPro" id="IPR015944">
    <property type="entry name" value="Gly-tRNA-synth_bsu"/>
</dbReference>
<dbReference type="InterPro" id="IPR006194">
    <property type="entry name" value="Gly-tRNA-synth_heterodimer"/>
</dbReference>
<dbReference type="NCBIfam" id="TIGR00211">
    <property type="entry name" value="glyS"/>
    <property type="match status" value="1"/>
</dbReference>
<dbReference type="PANTHER" id="PTHR30075:SF2">
    <property type="entry name" value="GLYCINE--TRNA LIGASE, CHLOROPLASTIC_MITOCHONDRIAL 2"/>
    <property type="match status" value="1"/>
</dbReference>
<dbReference type="PANTHER" id="PTHR30075">
    <property type="entry name" value="GLYCYL-TRNA SYNTHETASE"/>
    <property type="match status" value="1"/>
</dbReference>
<dbReference type="Pfam" id="PF05746">
    <property type="entry name" value="DALR_1"/>
    <property type="match status" value="1"/>
</dbReference>
<dbReference type="Pfam" id="PF02092">
    <property type="entry name" value="tRNA_synt_2f"/>
    <property type="match status" value="1"/>
</dbReference>
<dbReference type="PRINTS" id="PR01045">
    <property type="entry name" value="TRNASYNTHGB"/>
</dbReference>
<dbReference type="SMART" id="SM00836">
    <property type="entry name" value="DALR_1"/>
    <property type="match status" value="1"/>
</dbReference>
<dbReference type="SUPFAM" id="SSF109604">
    <property type="entry name" value="HD-domain/PDEase-like"/>
    <property type="match status" value="1"/>
</dbReference>
<dbReference type="PROSITE" id="PS50861">
    <property type="entry name" value="AA_TRNA_LIGASE_II_GLYAB"/>
    <property type="match status" value="1"/>
</dbReference>
<reference key="1">
    <citation type="submission" date="2007-09" db="EMBL/GenBank/DDBJ databases">
        <title>Complete genome sequence of Rickettsia canadensis.</title>
        <authorList>
            <person name="Madan A."/>
            <person name="Fahey J."/>
            <person name="Helton E."/>
            <person name="Ketteman M."/>
            <person name="Madan A."/>
            <person name="Rodrigues S."/>
            <person name="Sanchez A."/>
            <person name="Whiting M."/>
            <person name="Dasch G."/>
            <person name="Eremeeva M."/>
        </authorList>
    </citation>
    <scope>NUCLEOTIDE SEQUENCE [LARGE SCALE GENOMIC DNA]</scope>
    <source>
        <strain>McKiel</strain>
    </source>
</reference>
<sequence>MSELLLELFSEEIPAFMQKNAEKGYLNVFTKIFEENKIFAKVKVFVGPRRITLHATHLPKVTLPKDTAIKGPSLNASEAAINGFCKAHNVSKLELFTKLINNQLYYFFIKKTEEREIKEILPEIIIEAINKYSWTKSMFWGDYNIKWVRPLRNILCIFDGEILPMQFGHLTANNITYGHRLTDNKKIEVENFEDYKNKLSENHVILERTKREEIIKAGLLELANSHDLTIKEDNRLIEEVSGLTEFPVVLLGRIPLKFLELPKEVLISSMRRHQKYFCLFDKAGNFAPYFLFVSNGRFVNAELVIKGNEKVLAARLADALYFYKQDIAKTLESNLSKLLAVTFHVKLGNLREKVDRITNICNYIAPNNKDLIMAAKLCKSDLVSEMVGEFPDLQGIMGYYYAKHDGLDEEVATAIKDHYKPQGLSDNVPNGNAALLATADKIDSLVGLMIAGEAPTGSGDPYALRRQALGIIRIIIENKLELNLNDLINFSINLYKDSSDKNKDLIISFLKERIKFYFKNNYDISLINAVLDLSAEDLVSVSLKLNTLQKFLAEDAGKQLLNAYKRASNIIGDQKITGLVDGNLFTTQSEKELFAVMQKILPQIIDSITDKDYERVLNLLSSLLAPITSFFGNVLVNDPDPKIVQNRLSLLQNTCELFHKIAKFNRL</sequence>
<evidence type="ECO:0000255" key="1">
    <source>
        <dbReference type="HAMAP-Rule" id="MF_00255"/>
    </source>
</evidence>
<keyword id="KW-0030">Aminoacyl-tRNA synthetase</keyword>
<keyword id="KW-0067">ATP-binding</keyword>
<keyword id="KW-0963">Cytoplasm</keyword>
<keyword id="KW-0436">Ligase</keyword>
<keyword id="KW-0547">Nucleotide-binding</keyword>
<keyword id="KW-0648">Protein biosynthesis</keyword>